<gene>
    <name type="primary">rps4</name>
</gene>
<proteinExistence type="inferred from homology"/>
<keyword id="KW-0150">Chloroplast</keyword>
<keyword id="KW-0934">Plastid</keyword>
<keyword id="KW-0687">Ribonucleoprotein</keyword>
<keyword id="KW-0689">Ribosomal protein</keyword>
<keyword id="KW-0694">RNA-binding</keyword>
<keyword id="KW-0699">rRNA-binding</keyword>
<organism>
    <name type="scientific">Pyropia yezoensis</name>
    <name type="common">Susabi-nori</name>
    <name type="synonym">Porphyra yezoensis</name>
    <dbReference type="NCBI Taxonomy" id="2788"/>
    <lineage>
        <taxon>Eukaryota</taxon>
        <taxon>Rhodophyta</taxon>
        <taxon>Bangiophyceae</taxon>
        <taxon>Bangiales</taxon>
        <taxon>Bangiaceae</taxon>
        <taxon>Pyropia</taxon>
    </lineage>
</organism>
<feature type="chain" id="PRO_0000277023" description="Small ribosomal subunit protein uS4c">
    <location>
        <begin position="1"/>
        <end position="201"/>
    </location>
</feature>
<feature type="domain" description="S4 RNA-binding">
    <location>
        <begin position="90"/>
        <end position="153"/>
    </location>
</feature>
<feature type="region of interest" description="Disordered" evidence="2">
    <location>
        <begin position="15"/>
        <end position="45"/>
    </location>
</feature>
<feature type="compositionally biased region" description="Basic and acidic residues" evidence="2">
    <location>
        <begin position="35"/>
        <end position="45"/>
    </location>
</feature>
<protein>
    <recommendedName>
        <fullName evidence="3">Small ribosomal subunit protein uS4c</fullName>
    </recommendedName>
    <alternativeName>
        <fullName>30S ribosomal protein S4, chloroplastic</fullName>
    </alternativeName>
</protein>
<reference key="1">
    <citation type="submission" date="2003-11" db="EMBL/GenBank/DDBJ databases">
        <title>Whole genome sequence of Porphyra yezoensis chloroplast.</title>
        <authorList>
            <person name="Kunimoto M."/>
            <person name="Morishima K."/>
            <person name="Yoshikawa M."/>
            <person name="Fukuda S."/>
            <person name="Kobayashi T."/>
            <person name="Kobayashi M."/>
            <person name="Okazaki T."/>
            <person name="Ohara I."/>
            <person name="Nakayama I."/>
        </authorList>
    </citation>
    <scope>NUCLEOTIDE SEQUENCE [LARGE SCALE GENOMIC DNA]</scope>
    <source>
        <strain>U-51</strain>
    </source>
</reference>
<accession>Q1XDR8</accession>
<dbReference type="EMBL" id="AP006715">
    <property type="protein sequence ID" value="BAE92343.1"/>
    <property type="molecule type" value="Genomic_DNA"/>
</dbReference>
<dbReference type="RefSeq" id="YP_536900.1">
    <property type="nucleotide sequence ID" value="NC_007932.1"/>
</dbReference>
<dbReference type="SMR" id="Q1XDR8"/>
<dbReference type="GeneID" id="3978851"/>
<dbReference type="GO" id="GO:0009507">
    <property type="term" value="C:chloroplast"/>
    <property type="evidence" value="ECO:0007669"/>
    <property type="project" value="UniProtKB-SubCell"/>
</dbReference>
<dbReference type="GO" id="GO:0015935">
    <property type="term" value="C:small ribosomal subunit"/>
    <property type="evidence" value="ECO:0007669"/>
    <property type="project" value="InterPro"/>
</dbReference>
<dbReference type="GO" id="GO:0019843">
    <property type="term" value="F:rRNA binding"/>
    <property type="evidence" value="ECO:0007669"/>
    <property type="project" value="UniProtKB-UniRule"/>
</dbReference>
<dbReference type="GO" id="GO:0003735">
    <property type="term" value="F:structural constituent of ribosome"/>
    <property type="evidence" value="ECO:0007669"/>
    <property type="project" value="InterPro"/>
</dbReference>
<dbReference type="GO" id="GO:0042274">
    <property type="term" value="P:ribosomal small subunit biogenesis"/>
    <property type="evidence" value="ECO:0007669"/>
    <property type="project" value="TreeGrafter"/>
</dbReference>
<dbReference type="GO" id="GO:0006412">
    <property type="term" value="P:translation"/>
    <property type="evidence" value="ECO:0007669"/>
    <property type="project" value="UniProtKB-UniRule"/>
</dbReference>
<dbReference type="CDD" id="cd00165">
    <property type="entry name" value="S4"/>
    <property type="match status" value="1"/>
</dbReference>
<dbReference type="FunFam" id="3.10.290.10:FF:000001">
    <property type="entry name" value="30S ribosomal protein S4"/>
    <property type="match status" value="1"/>
</dbReference>
<dbReference type="FunFam" id="1.10.1050.10:FF:000002">
    <property type="entry name" value="30S ribosomal protein S4, chloroplastic"/>
    <property type="match status" value="1"/>
</dbReference>
<dbReference type="Gene3D" id="1.10.1050.10">
    <property type="entry name" value="Ribosomal Protein S4 Delta 41, Chain A, domain 1"/>
    <property type="match status" value="1"/>
</dbReference>
<dbReference type="Gene3D" id="3.10.290.10">
    <property type="entry name" value="RNA-binding S4 domain"/>
    <property type="match status" value="1"/>
</dbReference>
<dbReference type="HAMAP" id="MF_01306_B">
    <property type="entry name" value="Ribosomal_uS4_B"/>
    <property type="match status" value="1"/>
</dbReference>
<dbReference type="InterPro" id="IPR022801">
    <property type="entry name" value="Ribosomal_uS4"/>
</dbReference>
<dbReference type="InterPro" id="IPR005709">
    <property type="entry name" value="Ribosomal_uS4_bac-type"/>
</dbReference>
<dbReference type="InterPro" id="IPR018079">
    <property type="entry name" value="Ribosomal_uS4_CS"/>
</dbReference>
<dbReference type="InterPro" id="IPR001912">
    <property type="entry name" value="Ribosomal_uS4_N"/>
</dbReference>
<dbReference type="InterPro" id="IPR002942">
    <property type="entry name" value="S4_RNA-bd"/>
</dbReference>
<dbReference type="InterPro" id="IPR036986">
    <property type="entry name" value="S4_RNA-bd_sf"/>
</dbReference>
<dbReference type="NCBIfam" id="NF003717">
    <property type="entry name" value="PRK05327.1"/>
    <property type="match status" value="1"/>
</dbReference>
<dbReference type="NCBIfam" id="TIGR01017">
    <property type="entry name" value="rpsD_bact"/>
    <property type="match status" value="1"/>
</dbReference>
<dbReference type="PANTHER" id="PTHR11831">
    <property type="entry name" value="30S 40S RIBOSOMAL PROTEIN"/>
    <property type="match status" value="1"/>
</dbReference>
<dbReference type="PANTHER" id="PTHR11831:SF4">
    <property type="entry name" value="SMALL RIBOSOMAL SUBUNIT PROTEIN US4M"/>
    <property type="match status" value="1"/>
</dbReference>
<dbReference type="Pfam" id="PF00163">
    <property type="entry name" value="Ribosomal_S4"/>
    <property type="match status" value="1"/>
</dbReference>
<dbReference type="Pfam" id="PF01479">
    <property type="entry name" value="S4"/>
    <property type="match status" value="1"/>
</dbReference>
<dbReference type="SMART" id="SM01390">
    <property type="entry name" value="Ribosomal_S4"/>
    <property type="match status" value="1"/>
</dbReference>
<dbReference type="SMART" id="SM00363">
    <property type="entry name" value="S4"/>
    <property type="match status" value="1"/>
</dbReference>
<dbReference type="SUPFAM" id="SSF55174">
    <property type="entry name" value="Alpha-L RNA-binding motif"/>
    <property type="match status" value="1"/>
</dbReference>
<dbReference type="PROSITE" id="PS00632">
    <property type="entry name" value="RIBOSOMAL_S4"/>
    <property type="match status" value="1"/>
</dbReference>
<dbReference type="PROSITE" id="PS50889">
    <property type="entry name" value="S4"/>
    <property type="match status" value="1"/>
</dbReference>
<sequence length="201" mass="22790">MSRYRGPRVRISRRLGDLPGLSRKAIKRSYPPGEHGQKSRKPSEYAVRLEEKQKLRFNYGLSEKQLFKYVKAAKKLQGSTGQILLQLLEMRLDNTVFRLGMAPTIPAARQLVNHGHICINGQVVSICSYQCKPGESISVKNQEASRKLVENYLAFPGLANIPSHLELNKSNLSGKVNGVIDREWVALQLNELLVIEYYSRK</sequence>
<comment type="function">
    <text evidence="1">One of the primary rRNA binding proteins, it binds directly to 16S rRNA where it nucleates assembly of the body of the 30S subunit.</text>
</comment>
<comment type="function">
    <text evidence="1">With S5 and S12 plays an important role in translational accuracy.</text>
</comment>
<comment type="subunit">
    <text evidence="1">Part of the 30S ribosomal subunit. Contacts protein S5. The interaction surface between S4 and S5 is involved in control of translational fidelity (By similarity).</text>
</comment>
<comment type="subcellular location">
    <subcellularLocation>
        <location>Plastid</location>
        <location>Chloroplast</location>
    </subcellularLocation>
</comment>
<comment type="similarity">
    <text evidence="3">Belongs to the universal ribosomal protein uS4 family.</text>
</comment>
<geneLocation type="chloroplast"/>
<evidence type="ECO:0000250" key="1"/>
<evidence type="ECO:0000256" key="2">
    <source>
        <dbReference type="SAM" id="MobiDB-lite"/>
    </source>
</evidence>
<evidence type="ECO:0000305" key="3"/>
<name>RR4_PYRYE</name>